<feature type="chain" id="PRO_1000145138" description="Urease accessory protein UreF">
    <location>
        <begin position="1"/>
        <end position="223"/>
    </location>
</feature>
<reference key="1">
    <citation type="journal article" date="2010" name="Stand. Genomic Sci.">
        <title>Complete genome sequence of Rhizobium leguminosarum bv trifolii strain WSM2304, an effective microsymbiont of the South American clover Trifolium polymorphum.</title>
        <authorList>
            <person name="Reeve W."/>
            <person name="O'Hara G."/>
            <person name="Chain P."/>
            <person name="Ardley J."/>
            <person name="Brau L."/>
            <person name="Nandesena K."/>
            <person name="Tiwari R."/>
            <person name="Malfatti S."/>
            <person name="Kiss H."/>
            <person name="Lapidus A."/>
            <person name="Copeland A."/>
            <person name="Nolan M."/>
            <person name="Land M."/>
            <person name="Ivanova N."/>
            <person name="Mavromatis K."/>
            <person name="Markowitz V."/>
            <person name="Kyrpides N."/>
            <person name="Melino V."/>
            <person name="Denton M."/>
            <person name="Yates R."/>
            <person name="Howieson J."/>
        </authorList>
    </citation>
    <scope>NUCLEOTIDE SEQUENCE [LARGE SCALE GENOMIC DNA]</scope>
    <source>
        <strain>WSM2304</strain>
    </source>
</reference>
<evidence type="ECO:0000255" key="1">
    <source>
        <dbReference type="HAMAP-Rule" id="MF_01385"/>
    </source>
</evidence>
<comment type="function">
    <text evidence="1">Required for maturation of urease via the functional incorporation of the urease nickel metallocenter.</text>
</comment>
<comment type="subunit">
    <text evidence="1">UreD, UreF and UreG form a complex that acts as a GTP-hydrolysis-dependent molecular chaperone, activating the urease apoprotein by helping to assemble the nickel containing metallocenter of UreC. The UreE protein probably delivers the nickel.</text>
</comment>
<comment type="subcellular location">
    <subcellularLocation>
        <location evidence="1">Cytoplasm</location>
    </subcellularLocation>
</comment>
<comment type="similarity">
    <text evidence="1">Belongs to the UreF family.</text>
</comment>
<organism>
    <name type="scientific">Rhizobium leguminosarum bv. trifolii (strain WSM2304)</name>
    <dbReference type="NCBI Taxonomy" id="395492"/>
    <lineage>
        <taxon>Bacteria</taxon>
        <taxon>Pseudomonadati</taxon>
        <taxon>Pseudomonadota</taxon>
        <taxon>Alphaproteobacteria</taxon>
        <taxon>Hyphomicrobiales</taxon>
        <taxon>Rhizobiaceae</taxon>
        <taxon>Rhizobium/Agrobacterium group</taxon>
        <taxon>Rhizobium</taxon>
    </lineage>
</organism>
<gene>
    <name evidence="1" type="primary">ureF</name>
    <name type="ordered locus">Rleg2_3047</name>
</gene>
<accession>B5ZMN6</accession>
<proteinExistence type="inferred from homology"/>
<dbReference type="EMBL" id="CP001191">
    <property type="protein sequence ID" value="ACI56314.1"/>
    <property type="molecule type" value="Genomic_DNA"/>
</dbReference>
<dbReference type="RefSeq" id="WP_012558722.1">
    <property type="nucleotide sequence ID" value="NC_011369.1"/>
</dbReference>
<dbReference type="SMR" id="B5ZMN6"/>
<dbReference type="STRING" id="395492.Rleg2_3047"/>
<dbReference type="KEGG" id="rlt:Rleg2_3047"/>
<dbReference type="eggNOG" id="COG0830">
    <property type="taxonomic scope" value="Bacteria"/>
</dbReference>
<dbReference type="HOGENOM" id="CLU_049215_2_0_5"/>
<dbReference type="Proteomes" id="UP000008330">
    <property type="component" value="Chromosome"/>
</dbReference>
<dbReference type="GO" id="GO:0005737">
    <property type="term" value="C:cytoplasm"/>
    <property type="evidence" value="ECO:0007669"/>
    <property type="project" value="UniProtKB-SubCell"/>
</dbReference>
<dbReference type="GO" id="GO:0016151">
    <property type="term" value="F:nickel cation binding"/>
    <property type="evidence" value="ECO:0007669"/>
    <property type="project" value="UniProtKB-UniRule"/>
</dbReference>
<dbReference type="Gene3D" id="1.10.4190.10">
    <property type="entry name" value="Urease accessory protein UreF"/>
    <property type="match status" value="1"/>
</dbReference>
<dbReference type="HAMAP" id="MF_01385">
    <property type="entry name" value="UreF"/>
    <property type="match status" value="1"/>
</dbReference>
<dbReference type="InterPro" id="IPR002639">
    <property type="entry name" value="UreF"/>
</dbReference>
<dbReference type="InterPro" id="IPR038277">
    <property type="entry name" value="UreF_sf"/>
</dbReference>
<dbReference type="PANTHER" id="PTHR33620">
    <property type="entry name" value="UREASE ACCESSORY PROTEIN F"/>
    <property type="match status" value="1"/>
</dbReference>
<dbReference type="PANTHER" id="PTHR33620:SF1">
    <property type="entry name" value="UREASE ACCESSORY PROTEIN F"/>
    <property type="match status" value="1"/>
</dbReference>
<dbReference type="Pfam" id="PF01730">
    <property type="entry name" value="UreF"/>
    <property type="match status" value="1"/>
</dbReference>
<dbReference type="PIRSF" id="PIRSF009467">
    <property type="entry name" value="Ureas_acces_UreF"/>
    <property type="match status" value="1"/>
</dbReference>
<name>UREF_RHILW</name>
<protein>
    <recommendedName>
        <fullName evidence="1">Urease accessory protein UreF</fullName>
    </recommendedName>
</protein>
<keyword id="KW-0143">Chaperone</keyword>
<keyword id="KW-0963">Cytoplasm</keyword>
<keyword id="KW-0996">Nickel insertion</keyword>
<keyword id="KW-1185">Reference proteome</keyword>
<sequence>MTGDRELQALLRLTAWLSPAFPVGSFAYSGGLERAVADGLVTDAVSLAAWIGTLIGYGSVWNDAVLLAESHRWQAEPARLFEIAALAEALAGSRERHQETMLLGDAFLTAARAWPDGVFERLPDKAAYPVAVGAVTGAHGIGPEKALAVFLHAYASQAVSSGIRLGVTGQRDGVAVLAGLEECITEVARRAAASTLDDLGSATVQADIAGLRHETQATRLFRS</sequence>